<dbReference type="EC" id="2.4.2.10"/>
<dbReference type="EC" id="4.1.1.23"/>
<dbReference type="EMBL" id="X71842">
    <property type="protein sequence ID" value="CAA50686.1"/>
    <property type="molecule type" value="mRNA"/>
</dbReference>
<dbReference type="EMBL" id="AF276887">
    <property type="protein sequence ID" value="AAK69440.1"/>
    <property type="molecule type" value="Genomic_DNA"/>
</dbReference>
<dbReference type="EMBL" id="AL138656">
    <property type="protein sequence ID" value="CAB77567.1"/>
    <property type="molecule type" value="Genomic_DNA"/>
</dbReference>
<dbReference type="EMBL" id="CP002686">
    <property type="protein sequence ID" value="AEE79235.1"/>
    <property type="molecule type" value="Genomic_DNA"/>
</dbReference>
<dbReference type="EMBL" id="AY140098">
    <property type="protein sequence ID" value="AAM98239.1"/>
    <property type="molecule type" value="mRNA"/>
</dbReference>
<dbReference type="EMBL" id="BT006612">
    <property type="protein sequence ID" value="AAP31956.1"/>
    <property type="molecule type" value="mRNA"/>
</dbReference>
<dbReference type="PIR" id="S46440">
    <property type="entry name" value="S46440"/>
</dbReference>
<dbReference type="PIR" id="T47606">
    <property type="entry name" value="T47606"/>
</dbReference>
<dbReference type="RefSeq" id="NP_680130.1">
    <property type="nucleotide sequence ID" value="NM_148875.5"/>
</dbReference>
<dbReference type="SMR" id="Q42586"/>
<dbReference type="BioGRID" id="9928">
    <property type="interactions" value="3"/>
</dbReference>
<dbReference type="FunCoup" id="Q42586">
    <property type="interactions" value="3970"/>
</dbReference>
<dbReference type="IntAct" id="Q42586">
    <property type="interactions" value="1"/>
</dbReference>
<dbReference type="STRING" id="3702.Q42586"/>
<dbReference type="PaxDb" id="3702-AT3G54470.1"/>
<dbReference type="ProteomicsDB" id="245270"/>
<dbReference type="EnsemblPlants" id="AT3G54470.1">
    <property type="protein sequence ID" value="AT3G54470.1"/>
    <property type="gene ID" value="AT3G54470"/>
</dbReference>
<dbReference type="GeneID" id="824612"/>
<dbReference type="Gramene" id="AT3G54470.1">
    <property type="protein sequence ID" value="AT3G54470.1"/>
    <property type="gene ID" value="AT3G54470"/>
</dbReference>
<dbReference type="KEGG" id="ath:AT3G54470"/>
<dbReference type="Araport" id="AT3G54470"/>
<dbReference type="TAIR" id="AT3G54470"/>
<dbReference type="eggNOG" id="KOG1377">
    <property type="taxonomic scope" value="Eukaryota"/>
</dbReference>
<dbReference type="HOGENOM" id="CLU_049275_1_0_1"/>
<dbReference type="InParanoid" id="Q42586"/>
<dbReference type="OMA" id="SAKHVCG"/>
<dbReference type="OrthoDB" id="10263753at2759"/>
<dbReference type="PhylomeDB" id="Q42586"/>
<dbReference type="BioCyc" id="ARA:AT3G54470-MONOMER"/>
<dbReference type="BioCyc" id="MetaCyc:AT3G54470-MONOMER"/>
<dbReference type="UniPathway" id="UPA00070">
    <property type="reaction ID" value="UER00119"/>
</dbReference>
<dbReference type="UniPathway" id="UPA00070">
    <property type="reaction ID" value="UER00120"/>
</dbReference>
<dbReference type="CD-CODE" id="4299E36E">
    <property type="entry name" value="Nucleolus"/>
</dbReference>
<dbReference type="PRO" id="PR:Q42586"/>
<dbReference type="Proteomes" id="UP000006548">
    <property type="component" value="Chromosome 3"/>
</dbReference>
<dbReference type="ExpressionAtlas" id="Q42586">
    <property type="expression patterns" value="baseline and differential"/>
</dbReference>
<dbReference type="GO" id="GO:0004588">
    <property type="term" value="F:orotate phosphoribosyltransferase activity"/>
    <property type="evidence" value="ECO:0007669"/>
    <property type="project" value="UniProtKB-EC"/>
</dbReference>
<dbReference type="GO" id="GO:0004590">
    <property type="term" value="F:orotidine-5'-phosphate decarboxylase activity"/>
    <property type="evidence" value="ECO:0007669"/>
    <property type="project" value="UniProtKB-EC"/>
</dbReference>
<dbReference type="GO" id="GO:0006207">
    <property type="term" value="P:'de novo' pyrimidine nucleobase biosynthetic process"/>
    <property type="evidence" value="ECO:0007669"/>
    <property type="project" value="InterPro"/>
</dbReference>
<dbReference type="GO" id="GO:0044205">
    <property type="term" value="P:'de novo' UMP biosynthetic process"/>
    <property type="evidence" value="ECO:0007669"/>
    <property type="project" value="UniProtKB-UniPathway"/>
</dbReference>
<dbReference type="GO" id="GO:0016036">
    <property type="term" value="P:cellular response to phosphate starvation"/>
    <property type="evidence" value="ECO:0000270"/>
    <property type="project" value="TAIR"/>
</dbReference>
<dbReference type="CDD" id="cd04725">
    <property type="entry name" value="OMP_decarboxylase_like"/>
    <property type="match status" value="1"/>
</dbReference>
<dbReference type="CDD" id="cd06223">
    <property type="entry name" value="PRTases_typeI"/>
    <property type="match status" value="1"/>
</dbReference>
<dbReference type="FunFam" id="3.20.20.70:FF:000092">
    <property type="entry name" value="Uridine monophosphate synthetase"/>
    <property type="match status" value="1"/>
</dbReference>
<dbReference type="FunFam" id="3.40.50.2020:FF:000025">
    <property type="entry name" value="Uridine monophosphate synthetase"/>
    <property type="match status" value="1"/>
</dbReference>
<dbReference type="Gene3D" id="3.40.50.2020">
    <property type="match status" value="1"/>
</dbReference>
<dbReference type="Gene3D" id="3.20.20.70">
    <property type="entry name" value="Aldolase class I"/>
    <property type="match status" value="1"/>
</dbReference>
<dbReference type="HAMAP" id="MF_01208">
    <property type="entry name" value="PyrE"/>
    <property type="match status" value="1"/>
</dbReference>
<dbReference type="InterPro" id="IPR013785">
    <property type="entry name" value="Aldolase_TIM"/>
</dbReference>
<dbReference type="InterPro" id="IPR014732">
    <property type="entry name" value="OMPdecase"/>
</dbReference>
<dbReference type="InterPro" id="IPR018089">
    <property type="entry name" value="OMPdecase_AS"/>
</dbReference>
<dbReference type="InterPro" id="IPR001754">
    <property type="entry name" value="OMPdeCOase_dom"/>
</dbReference>
<dbReference type="InterPro" id="IPR023031">
    <property type="entry name" value="OPRT"/>
</dbReference>
<dbReference type="InterPro" id="IPR004467">
    <property type="entry name" value="Or_phspho_trans_dom"/>
</dbReference>
<dbReference type="InterPro" id="IPR000836">
    <property type="entry name" value="PRibTrfase_dom"/>
</dbReference>
<dbReference type="InterPro" id="IPR029057">
    <property type="entry name" value="PRTase-like"/>
</dbReference>
<dbReference type="InterPro" id="IPR011060">
    <property type="entry name" value="RibuloseP-bd_barrel"/>
</dbReference>
<dbReference type="NCBIfam" id="NF010382">
    <property type="entry name" value="PRK13809.1"/>
    <property type="match status" value="1"/>
</dbReference>
<dbReference type="NCBIfam" id="TIGR00336">
    <property type="entry name" value="pyrE"/>
    <property type="match status" value="1"/>
</dbReference>
<dbReference type="NCBIfam" id="TIGR01740">
    <property type="entry name" value="pyrF"/>
    <property type="match status" value="1"/>
</dbReference>
<dbReference type="PANTHER" id="PTHR19278">
    <property type="entry name" value="OROTATE PHOSPHORIBOSYLTRANSFERASE"/>
    <property type="match status" value="1"/>
</dbReference>
<dbReference type="PANTHER" id="PTHR19278:SF9">
    <property type="entry name" value="URIDINE 5'-MONOPHOSPHATE SYNTHASE"/>
    <property type="match status" value="1"/>
</dbReference>
<dbReference type="Pfam" id="PF00215">
    <property type="entry name" value="OMPdecase"/>
    <property type="match status" value="1"/>
</dbReference>
<dbReference type="Pfam" id="PF00156">
    <property type="entry name" value="Pribosyltran"/>
    <property type="match status" value="1"/>
</dbReference>
<dbReference type="SMART" id="SM00934">
    <property type="entry name" value="OMPdecase"/>
    <property type="match status" value="1"/>
</dbReference>
<dbReference type="SUPFAM" id="SSF53271">
    <property type="entry name" value="PRTase-like"/>
    <property type="match status" value="1"/>
</dbReference>
<dbReference type="SUPFAM" id="SSF51366">
    <property type="entry name" value="Ribulose-phoshate binding barrel"/>
    <property type="match status" value="1"/>
</dbReference>
<dbReference type="PROSITE" id="PS00156">
    <property type="entry name" value="OMPDECASE"/>
    <property type="match status" value="1"/>
</dbReference>
<dbReference type="PROSITE" id="PS00103">
    <property type="entry name" value="PUR_PYR_PR_TRANSFER"/>
    <property type="match status" value="1"/>
</dbReference>
<reference key="1">
    <citation type="journal article" date="1994" name="Mol. Gen. Genet.">
        <title>Heterospecific cloning of Arabidopsis thaliana cDNAs by direct complementation of pyrimidine auxotrophic mutants of Saccharomyces cerevisiae. I. Cloning and sequence analysis of two cDNAs catalysing the second, fifth and sixth steps of the de novo pyrimidine biosynthesis pathway.</title>
        <authorList>
            <person name="Nasr F."/>
            <person name="Bertauche N."/>
            <person name="Dufour M.E."/>
            <person name="Minet M."/>
            <person name="Lacroute F."/>
        </authorList>
    </citation>
    <scope>NUCLEOTIDE SEQUENCE [MRNA]</scope>
</reference>
<reference key="2">
    <citation type="submission" date="2000-06" db="EMBL/GenBank/DDBJ databases">
        <title>Transcriptional analysis of the Arabidopsis thaliana UMP synthase locus.</title>
        <authorList>
            <person name="Kafer C.W."/>
            <person name="Thornburg R.W."/>
        </authorList>
    </citation>
    <scope>NUCLEOTIDE SEQUENCE</scope>
    <source>
        <strain>cv. Columbia</strain>
    </source>
</reference>
<reference key="3">
    <citation type="journal article" date="2000" name="Nature">
        <title>Sequence and analysis of chromosome 3 of the plant Arabidopsis thaliana.</title>
        <authorList>
            <person name="Salanoubat M."/>
            <person name="Lemcke K."/>
            <person name="Rieger M."/>
            <person name="Ansorge W."/>
            <person name="Unseld M."/>
            <person name="Fartmann B."/>
            <person name="Valle G."/>
            <person name="Bloecker H."/>
            <person name="Perez-Alonso M."/>
            <person name="Obermaier B."/>
            <person name="Delseny M."/>
            <person name="Boutry M."/>
            <person name="Grivell L.A."/>
            <person name="Mache R."/>
            <person name="Puigdomenech P."/>
            <person name="De Simone V."/>
            <person name="Choisne N."/>
            <person name="Artiguenave F."/>
            <person name="Robert C."/>
            <person name="Brottier P."/>
            <person name="Wincker P."/>
            <person name="Cattolico L."/>
            <person name="Weissenbach J."/>
            <person name="Saurin W."/>
            <person name="Quetier F."/>
            <person name="Schaefer M."/>
            <person name="Mueller-Auer S."/>
            <person name="Gabel C."/>
            <person name="Fuchs M."/>
            <person name="Benes V."/>
            <person name="Wurmbach E."/>
            <person name="Drzonek H."/>
            <person name="Erfle H."/>
            <person name="Jordan N."/>
            <person name="Bangert S."/>
            <person name="Wiedelmann R."/>
            <person name="Kranz H."/>
            <person name="Voss H."/>
            <person name="Holland R."/>
            <person name="Brandt P."/>
            <person name="Nyakatura G."/>
            <person name="Vezzi A."/>
            <person name="D'Angelo M."/>
            <person name="Pallavicini A."/>
            <person name="Toppo S."/>
            <person name="Simionati B."/>
            <person name="Conrad A."/>
            <person name="Hornischer K."/>
            <person name="Kauer G."/>
            <person name="Loehnert T.-H."/>
            <person name="Nordsiek G."/>
            <person name="Reichelt J."/>
            <person name="Scharfe M."/>
            <person name="Schoen O."/>
            <person name="Bargues M."/>
            <person name="Terol J."/>
            <person name="Climent J."/>
            <person name="Navarro P."/>
            <person name="Collado C."/>
            <person name="Perez-Perez A."/>
            <person name="Ottenwaelder B."/>
            <person name="Duchemin D."/>
            <person name="Cooke R."/>
            <person name="Laudie M."/>
            <person name="Berger-Llauro C."/>
            <person name="Purnelle B."/>
            <person name="Masuy D."/>
            <person name="de Haan M."/>
            <person name="Maarse A.C."/>
            <person name="Alcaraz J.-P."/>
            <person name="Cottet A."/>
            <person name="Casacuberta E."/>
            <person name="Monfort A."/>
            <person name="Argiriou A."/>
            <person name="Flores M."/>
            <person name="Liguori R."/>
            <person name="Vitale D."/>
            <person name="Mannhaupt G."/>
            <person name="Haase D."/>
            <person name="Schoof H."/>
            <person name="Rudd S."/>
            <person name="Zaccaria P."/>
            <person name="Mewes H.-W."/>
            <person name="Mayer K.F.X."/>
            <person name="Kaul S."/>
            <person name="Town C.D."/>
            <person name="Koo H.L."/>
            <person name="Tallon L.J."/>
            <person name="Jenkins J."/>
            <person name="Rooney T."/>
            <person name="Rizzo M."/>
            <person name="Walts A."/>
            <person name="Utterback T."/>
            <person name="Fujii C.Y."/>
            <person name="Shea T.P."/>
            <person name="Creasy T.H."/>
            <person name="Haas B."/>
            <person name="Maiti R."/>
            <person name="Wu D."/>
            <person name="Peterson J."/>
            <person name="Van Aken S."/>
            <person name="Pai G."/>
            <person name="Militscher J."/>
            <person name="Sellers P."/>
            <person name="Gill J.E."/>
            <person name="Feldblyum T.V."/>
            <person name="Preuss D."/>
            <person name="Lin X."/>
            <person name="Nierman W.C."/>
            <person name="Salzberg S.L."/>
            <person name="White O."/>
            <person name="Venter J.C."/>
            <person name="Fraser C.M."/>
            <person name="Kaneko T."/>
            <person name="Nakamura Y."/>
            <person name="Sato S."/>
            <person name="Kato T."/>
            <person name="Asamizu E."/>
            <person name="Sasamoto S."/>
            <person name="Kimura T."/>
            <person name="Idesawa K."/>
            <person name="Kawashima K."/>
            <person name="Kishida Y."/>
            <person name="Kiyokawa C."/>
            <person name="Kohara M."/>
            <person name="Matsumoto M."/>
            <person name="Matsuno A."/>
            <person name="Muraki A."/>
            <person name="Nakayama S."/>
            <person name="Nakazaki N."/>
            <person name="Shinpo S."/>
            <person name="Takeuchi C."/>
            <person name="Wada T."/>
            <person name="Watanabe A."/>
            <person name="Yamada M."/>
            <person name="Yasuda M."/>
            <person name="Tabata S."/>
        </authorList>
    </citation>
    <scope>NUCLEOTIDE SEQUENCE [LARGE SCALE GENOMIC DNA]</scope>
    <source>
        <strain>cv. Columbia</strain>
    </source>
</reference>
<reference key="4">
    <citation type="journal article" date="2017" name="Plant J.">
        <title>Araport11: a complete reannotation of the Arabidopsis thaliana reference genome.</title>
        <authorList>
            <person name="Cheng C.Y."/>
            <person name="Krishnakumar V."/>
            <person name="Chan A.P."/>
            <person name="Thibaud-Nissen F."/>
            <person name="Schobel S."/>
            <person name="Town C.D."/>
        </authorList>
    </citation>
    <scope>GENOME REANNOTATION</scope>
    <source>
        <strain>cv. Columbia</strain>
    </source>
</reference>
<reference key="5">
    <citation type="journal article" date="2003" name="Science">
        <title>Empirical analysis of transcriptional activity in the Arabidopsis genome.</title>
        <authorList>
            <person name="Yamada K."/>
            <person name="Lim J."/>
            <person name="Dale J.M."/>
            <person name="Chen H."/>
            <person name="Shinn P."/>
            <person name="Palm C.J."/>
            <person name="Southwick A.M."/>
            <person name="Wu H.C."/>
            <person name="Kim C.J."/>
            <person name="Nguyen M."/>
            <person name="Pham P.K."/>
            <person name="Cheuk R.F."/>
            <person name="Karlin-Newmann G."/>
            <person name="Liu S.X."/>
            <person name="Lam B."/>
            <person name="Sakano H."/>
            <person name="Wu T."/>
            <person name="Yu G."/>
            <person name="Miranda M."/>
            <person name="Quach H.L."/>
            <person name="Tripp M."/>
            <person name="Chang C.H."/>
            <person name="Lee J.M."/>
            <person name="Toriumi M.J."/>
            <person name="Chan M.M."/>
            <person name="Tang C.C."/>
            <person name="Onodera C.S."/>
            <person name="Deng J.M."/>
            <person name="Akiyama K."/>
            <person name="Ansari Y."/>
            <person name="Arakawa T."/>
            <person name="Banh J."/>
            <person name="Banno F."/>
            <person name="Bowser L."/>
            <person name="Brooks S.Y."/>
            <person name="Carninci P."/>
            <person name="Chao Q."/>
            <person name="Choy N."/>
            <person name="Enju A."/>
            <person name="Goldsmith A.D."/>
            <person name="Gurjal M."/>
            <person name="Hansen N.F."/>
            <person name="Hayashizaki Y."/>
            <person name="Johnson-Hopson C."/>
            <person name="Hsuan V.W."/>
            <person name="Iida K."/>
            <person name="Karnes M."/>
            <person name="Khan S."/>
            <person name="Koesema E."/>
            <person name="Ishida J."/>
            <person name="Jiang P.X."/>
            <person name="Jones T."/>
            <person name="Kawai J."/>
            <person name="Kamiya A."/>
            <person name="Meyers C."/>
            <person name="Nakajima M."/>
            <person name="Narusaka M."/>
            <person name="Seki M."/>
            <person name="Sakurai T."/>
            <person name="Satou M."/>
            <person name="Tamse R."/>
            <person name="Vaysberg M."/>
            <person name="Wallender E.K."/>
            <person name="Wong C."/>
            <person name="Yamamura Y."/>
            <person name="Yuan S."/>
            <person name="Shinozaki K."/>
            <person name="Davis R.W."/>
            <person name="Theologis A."/>
            <person name="Ecker J.R."/>
        </authorList>
    </citation>
    <scope>NUCLEOTIDE SEQUENCE [LARGE SCALE MRNA]</scope>
    <source>
        <strain>cv. Columbia</strain>
    </source>
</reference>
<evidence type="ECO:0000250" key="1"/>
<evidence type="ECO:0000305" key="2"/>
<name>UMPS_ARATH</name>
<comment type="catalytic activity">
    <reaction>
        <text>orotidine 5'-phosphate + diphosphate = orotate + 5-phospho-alpha-D-ribose 1-diphosphate</text>
        <dbReference type="Rhea" id="RHEA:10380"/>
        <dbReference type="ChEBI" id="CHEBI:30839"/>
        <dbReference type="ChEBI" id="CHEBI:33019"/>
        <dbReference type="ChEBI" id="CHEBI:57538"/>
        <dbReference type="ChEBI" id="CHEBI:58017"/>
        <dbReference type="EC" id="2.4.2.10"/>
    </reaction>
</comment>
<comment type="catalytic activity">
    <reaction>
        <text>orotidine 5'-phosphate + H(+) = UMP + CO2</text>
        <dbReference type="Rhea" id="RHEA:11596"/>
        <dbReference type="ChEBI" id="CHEBI:15378"/>
        <dbReference type="ChEBI" id="CHEBI:16526"/>
        <dbReference type="ChEBI" id="CHEBI:57538"/>
        <dbReference type="ChEBI" id="CHEBI:57865"/>
        <dbReference type="EC" id="4.1.1.23"/>
    </reaction>
</comment>
<comment type="pathway">
    <text>Pyrimidine metabolism; UMP biosynthesis via de novo pathway; UMP from orotate: step 1/2.</text>
</comment>
<comment type="pathway">
    <text>Pyrimidine metabolism; UMP biosynthesis via de novo pathway; UMP from orotate: step 2/2.</text>
</comment>
<comment type="similarity">
    <text evidence="2">In the N-terminal section; belongs to the purine/pyrimidine phosphoribosyltransferase family.</text>
</comment>
<comment type="similarity">
    <text evidence="2">In the C-terminal section; belongs to the OMP decarboxylase family.</text>
</comment>
<proteinExistence type="evidence at transcript level"/>
<protein>
    <recommendedName>
        <fullName>Uridine 5'-monophosphate synthase</fullName>
        <shortName>UMP synthase</shortName>
    </recommendedName>
    <domain>
        <recommendedName>
            <fullName>Orotate phosphoribosyltransferase</fullName>
            <shortName>OPRTase</shortName>
            <ecNumber>2.4.2.10</ecNumber>
        </recommendedName>
    </domain>
    <domain>
        <recommendedName>
            <fullName>Orotidine 5'-phosphate decarboxylase</fullName>
            <ecNumber>4.1.1.23</ecNumber>
        </recommendedName>
        <alternativeName>
            <fullName>OMPdecase</fullName>
        </alternativeName>
    </domain>
</protein>
<accession>Q42586</accession>
<accession>Q9M1I0</accession>
<feature type="chain" id="PRO_0000139653" description="Uridine 5'-monophosphate synthase">
    <location>
        <begin position="1"/>
        <end position="476"/>
    </location>
</feature>
<feature type="active site" evidence="1">
    <location>
        <position position="305"/>
    </location>
</feature>
<feature type="sequence conflict" description="In Ref. 1 and 2." evidence="2" ref="1 2">
    <original>V</original>
    <variation>E</variation>
    <location>
        <position position="186"/>
    </location>
</feature>
<gene>
    <name type="primary">PYRE-F</name>
    <name type="synonym">UMPS</name>
    <name type="ordered locus">At3g54470</name>
    <name type="ORF">T14E10.40</name>
</gene>
<organism>
    <name type="scientific">Arabidopsis thaliana</name>
    <name type="common">Mouse-ear cress</name>
    <dbReference type="NCBI Taxonomy" id="3702"/>
    <lineage>
        <taxon>Eukaryota</taxon>
        <taxon>Viridiplantae</taxon>
        <taxon>Streptophyta</taxon>
        <taxon>Embryophyta</taxon>
        <taxon>Tracheophyta</taxon>
        <taxon>Spermatophyta</taxon>
        <taxon>Magnoliopsida</taxon>
        <taxon>eudicotyledons</taxon>
        <taxon>Gunneridae</taxon>
        <taxon>Pentapetalae</taxon>
        <taxon>rosids</taxon>
        <taxon>malvids</taxon>
        <taxon>Brassicales</taxon>
        <taxon>Brassicaceae</taxon>
        <taxon>Camelineae</taxon>
        <taxon>Arabidopsis</taxon>
    </lineage>
</organism>
<keyword id="KW-0210">Decarboxylase</keyword>
<keyword id="KW-0328">Glycosyltransferase</keyword>
<keyword id="KW-0456">Lyase</keyword>
<keyword id="KW-0511">Multifunctional enzyme</keyword>
<keyword id="KW-0665">Pyrimidine biosynthesis</keyword>
<keyword id="KW-1185">Reference proteome</keyword>
<keyword id="KW-0808">Transferase</keyword>
<sequence>MSAMEALILQLHEIGAVKFGNFKLKSGIFSPVYIDLRLIVSYPSLLTQISQTLISSLPPSATFDVVCGVPYTALPIATVVSVSNGIPMLMRRKEIKDYGTSKAIEGIFEKDQTCLIIEDLVTSGASVLETAAPLRAVGLKVSDAVVLIDRQQGGRENLAENGIKLHSMIMLTDMVRVLKEKGKIEVEVEVNLLKFLEENRRVSVPSVEKPKPKPRVLGFKERSELSKNPTGKKLFDIMLKKETNLCLAADVGTAAELLDIADKVGPEICLLKTHVDILPDFTPDFGSKLRAIADKHKFLIFEDRKFADIGNTVTMQYEGGIFKILEWADIINAHVISGPGIVDGLKLKGMPRGRGLLLLAEMSSAGNLATGDYTAAAVKIADAHSDFVMGFISVNPASWKCGYVYPSMIHATPGVQMVKGGDALGQQYNTPHSVITERGSDIIIVGRGIIKAENPAETAHEYRVQGWNAYLEKCSQ</sequence>